<reference key="1">
    <citation type="journal article" date="1998" name="Proc. Natl. Acad. Sci. U.S.A.">
        <title>A member of a new family of sulfate activating enzymes causes murine brachymorphism.</title>
        <authorList>
            <person name="Kurima K."/>
            <person name="Warman M.L."/>
            <person name="Krishnan S."/>
            <person name="Domowicz M."/>
            <person name="Krueger R.C. Jr."/>
            <person name="Deyrup A."/>
            <person name="Schwartz N.B."/>
        </authorList>
    </citation>
    <scope>NUCLEOTIDE SEQUENCE [MRNA]</scope>
    <scope>VARIANT BM ARG-79</scope>
    <source>
        <tissue>Liver</tissue>
    </source>
</reference>
<reference key="2">
    <citation type="journal article" date="1998" name="Nat. Genet.">
        <title>Mutations in orthologous genes in human spondyloepimetaphyseal dysplasia and the brachymorphic mouse.</title>
        <authorList>
            <person name="ul Haque M.F."/>
            <person name="King L.M."/>
            <person name="Krakow D."/>
            <person name="Cantor R.M."/>
            <person name="Rusiniak M.E."/>
            <person name="Swank R.T."/>
            <person name="Superti-Furga A."/>
            <person name="Haque S."/>
            <person name="Abbas H."/>
            <person name="Ahmad W."/>
            <person name="Ahmad M."/>
            <person name="Cohn D.H."/>
        </authorList>
    </citation>
    <scope>NUCLEOTIDE SEQUENCE [MRNA]</scope>
    <scope>FUNCTION</scope>
    <scope>VARIANT BM ARG-79</scope>
    <scope>VARIANT LYS-109</scope>
    <source>
        <strain>PWK</strain>
        <tissue>Spleen</tissue>
    </source>
</reference>
<reference key="3">
    <citation type="journal article" date="2004" name="Genome Res.">
        <title>The status, quality, and expansion of the NIH full-length cDNA project: the Mammalian Gene Collection (MGC).</title>
        <authorList>
            <consortium name="The MGC Project Team"/>
        </authorList>
    </citation>
    <scope>NUCLEOTIDE SEQUENCE [LARGE SCALE MRNA]</scope>
    <source>
        <tissue>Kidney</tissue>
    </source>
</reference>
<reference key="4">
    <citation type="journal article" date="1999" name="J. Biol. Chem.">
        <title>Genomic organization of the mouse and human genes encoding the ATP sulfurylase/adenosine 5'-phosphosulfate kinase isoform SK2.</title>
        <authorList>
            <person name="Kurima K."/>
            <person name="Singh B."/>
            <person name="Schwartz N.B."/>
        </authorList>
    </citation>
    <scope>FUNCTION</scope>
    <scope>CATALYTIC ACTIVITY</scope>
    <scope>PATHWAY</scope>
    <scope>REGION</scope>
</reference>
<reference key="5">
    <citation type="journal article" date="2010" name="Cell">
        <title>A tissue-specific atlas of mouse protein phosphorylation and expression.</title>
        <authorList>
            <person name="Huttlin E.L."/>
            <person name="Jedrychowski M.P."/>
            <person name="Elias J.E."/>
            <person name="Goswami T."/>
            <person name="Rad R."/>
            <person name="Beausoleil S.A."/>
            <person name="Villen J."/>
            <person name="Haas W."/>
            <person name="Sowa M.E."/>
            <person name="Gygi S.P."/>
        </authorList>
    </citation>
    <scope>IDENTIFICATION BY MASS SPECTROMETRY [LARGE SCALE ANALYSIS]</scope>
    <source>
        <tissue>Kidney</tissue>
        <tissue>Liver</tissue>
        <tissue>Lung</tissue>
        <tissue>Spleen</tissue>
    </source>
</reference>
<comment type="function">
    <text evidence="3">Bifunctional enzyme with both ATP sulfurylase and APS kinase activity, which mediates two steps in the sulfate activation pathway. The first step is the transfer of a sulfate group to ATP to yield adenosine 5'-phosphosulfate (APS), and the second step is the transfer of a phosphate group from ATP to APS yielding 3'-phosphoadenylylsulfate/PAPS, the activated sulfate donor used by sulfotransferases (PubMed:10559207). In mammals, PAPS is the sole source of sulfate while APS appears to only be an intermediate in the sulfate-activation pathway. May have an important role in skeletogenesis during postnatal growth.</text>
</comment>
<comment type="catalytic activity">
    <reaction evidence="3">
        <text>sulfate + ATP + H(+) = adenosine 5'-phosphosulfate + diphosphate</text>
        <dbReference type="Rhea" id="RHEA:18133"/>
        <dbReference type="ChEBI" id="CHEBI:15378"/>
        <dbReference type="ChEBI" id="CHEBI:16189"/>
        <dbReference type="ChEBI" id="CHEBI:30616"/>
        <dbReference type="ChEBI" id="CHEBI:33019"/>
        <dbReference type="ChEBI" id="CHEBI:58243"/>
        <dbReference type="EC" id="2.7.7.4"/>
    </reaction>
    <physiologicalReaction direction="left-to-right" evidence="7">
        <dbReference type="Rhea" id="RHEA:18134"/>
    </physiologicalReaction>
</comment>
<comment type="catalytic activity">
    <reaction evidence="3">
        <text>adenosine 5'-phosphosulfate + ATP = 3'-phosphoadenylyl sulfate + ADP + H(+)</text>
        <dbReference type="Rhea" id="RHEA:24152"/>
        <dbReference type="ChEBI" id="CHEBI:15378"/>
        <dbReference type="ChEBI" id="CHEBI:30616"/>
        <dbReference type="ChEBI" id="CHEBI:58243"/>
        <dbReference type="ChEBI" id="CHEBI:58339"/>
        <dbReference type="ChEBI" id="CHEBI:456216"/>
        <dbReference type="EC" id="2.7.1.25"/>
    </reaction>
    <physiologicalReaction direction="left-to-right" evidence="7">
        <dbReference type="Rhea" id="RHEA:24153"/>
    </physiologicalReaction>
</comment>
<comment type="pathway">
    <text evidence="7">Sulfur metabolism; sulfate assimilation.</text>
</comment>
<comment type="tissue specificity">
    <text>Expressed in liver, cartilage, skin and brain.</text>
</comment>
<comment type="disease">
    <text>Defects in Papss2 are the cause of brachymorphism (bm), a autosomal recessive disease, which is characterized by abnormal hepatic detoxification, bleeding times and postnatal growth, such as dome-shaped skull, short thick tail, and shortened but not widened limbs. The abnormal postnatal growth has been attributed to undersulfation of cartilage proteoglycans.</text>
</comment>
<comment type="similarity">
    <text evidence="6">In the N-terminal section; belongs to the APS kinase family.</text>
</comment>
<comment type="similarity">
    <text evidence="6">In the C-terminal section; belongs to the sulfate adenylyltransferase family.</text>
</comment>
<keyword id="KW-0067">ATP-binding</keyword>
<keyword id="KW-0225">Disease variant</keyword>
<keyword id="KW-0418">Kinase</keyword>
<keyword id="KW-0511">Multifunctional enzyme</keyword>
<keyword id="KW-0547">Nucleotide-binding</keyword>
<keyword id="KW-0548">Nucleotidyltransferase</keyword>
<keyword id="KW-1185">Reference proteome</keyword>
<keyword id="KW-0808">Transferase</keyword>
<evidence type="ECO:0000250" key="1">
    <source>
        <dbReference type="UniProtKB" id="O43252"/>
    </source>
</evidence>
<evidence type="ECO:0000250" key="2">
    <source>
        <dbReference type="UniProtKB" id="O95340"/>
    </source>
</evidence>
<evidence type="ECO:0000269" key="3">
    <source>
    </source>
</evidence>
<evidence type="ECO:0000269" key="4">
    <source>
    </source>
</evidence>
<evidence type="ECO:0000269" key="5">
    <source>
    </source>
</evidence>
<evidence type="ECO:0000305" key="6"/>
<evidence type="ECO:0000305" key="7">
    <source>
    </source>
</evidence>
<proteinExistence type="evidence at protein level"/>
<protein>
    <recommendedName>
        <fullName evidence="7">Bifunctional 3'-phosphoadenosine 5'-phosphosulfate synthase 2</fullName>
        <shortName>PAPS synthase 2</shortName>
        <shortName>PAPSS 2</shortName>
    </recommendedName>
    <alternativeName>
        <fullName>Sulfurylase kinase 2</fullName>
        <shortName>SK 2</shortName>
        <shortName>SK2</shortName>
    </alternativeName>
    <domain>
        <recommendedName>
            <fullName evidence="7">Sulfate adenylyltransferase</fullName>
            <ecNumber evidence="3">2.7.7.4</ecNumber>
        </recommendedName>
        <alternativeName>
            <fullName>ATP-sulfurylase</fullName>
        </alternativeName>
        <alternativeName>
            <fullName>Sulfate adenylate transferase</fullName>
            <shortName>SAT</shortName>
        </alternativeName>
    </domain>
    <domain>
        <recommendedName>
            <fullName evidence="7">Adenylyl-sulfate kinase</fullName>
            <ecNumber evidence="3">2.7.1.25</ecNumber>
        </recommendedName>
        <alternativeName>
            <fullName>3'-phosphoadenosine-5'-phosphosulfate synthase</fullName>
        </alternativeName>
        <alternativeName>
            <fullName>APS kinase</fullName>
        </alternativeName>
        <alternativeName>
            <fullName>Adenosine-5'-phosphosulfate 3'-phosphotransferase</fullName>
        </alternativeName>
        <alternativeName>
            <fullName>Adenylylsulfate 3'-phosphotransferase</fullName>
        </alternativeName>
    </domain>
</protein>
<sequence>MSANFKMNHKRDQQKSTNVVYQAHHVSRNKRGQVVGTRGGFRGCTVWLTGLSGAGKTTISFALEEYLVSHAIPCYSLDGDNVRHGLNKNLGFSAGDREENIRRIAEVARLFADAGLVCITSFISPFAKDRENARKIHESAGLPFFEIFVDAPLNICESRDVKGLYKRARAGEIKGFTGIDSDYEKPETPECVLKTNLSSVSDCVQQVVELLQEQNIVPHTTIKGIHELFVPENKVDQIRAEAETLPSLPITKLDLQWVQILSEGWATPLKGFMREKEYLQTLHFDTLLDGVVPRDGVINMSIPIVLPVSADDKARLEGCSKFALMYEGRRVALLQDPEFYEHRKEERCSRVWGTATAKHPHIKMVMESGDWLVGGDLQVLERIRWDDGLDQYRLTPLELKQKCKDMNADAVFAFQLRNPVHNGHALLMQDTRRRLLERGYKHPVLLLHPLGGWTKDDDVPLEWRMKQHAAVLEERVLDPKSTIVAIFPSPMLYAGPTEVQWHCRCRMIAGANFYIVGRDPAGMPHPETKKDLYEPTHGGKVLSMAPGLTSVEIIPFRVAAYNKIKKAMDFYDPARHEEFDFISGTRMRKLAREGEDPPDGFMAPKAWKVLTDYYRSLEKTN</sequence>
<dbReference type="EC" id="2.7.7.4" evidence="3"/>
<dbReference type="EC" id="2.7.1.25" evidence="3"/>
<dbReference type="EMBL" id="AF052453">
    <property type="protein sequence ID" value="AAC40191.1"/>
    <property type="molecule type" value="mRNA"/>
</dbReference>
<dbReference type="EMBL" id="AF085144">
    <property type="protein sequence ID" value="AAC98687.1"/>
    <property type="molecule type" value="mRNA"/>
</dbReference>
<dbReference type="EMBL" id="BC090997">
    <property type="protein sequence ID" value="AAH90997.1"/>
    <property type="molecule type" value="mRNA"/>
</dbReference>
<dbReference type="CCDS" id="CCDS37960.1"/>
<dbReference type="RefSeq" id="NP_035994.2">
    <property type="nucleotide sequence ID" value="NM_011864.3"/>
</dbReference>
<dbReference type="SMR" id="O88428"/>
<dbReference type="FunCoup" id="O88428">
    <property type="interactions" value="916"/>
</dbReference>
<dbReference type="STRING" id="10090.ENSMUSP00000025833"/>
<dbReference type="GlyGen" id="O88428">
    <property type="glycosylation" value="1 site, 1 O-linked glycan (1 site)"/>
</dbReference>
<dbReference type="iPTMnet" id="O88428"/>
<dbReference type="PhosphoSitePlus" id="O88428"/>
<dbReference type="SwissPalm" id="O88428"/>
<dbReference type="jPOST" id="O88428"/>
<dbReference type="PaxDb" id="10090-ENSMUSP00000025833"/>
<dbReference type="PeptideAtlas" id="O88428"/>
<dbReference type="ProteomicsDB" id="288059"/>
<dbReference type="Pumba" id="O88428"/>
<dbReference type="Antibodypedia" id="30161">
    <property type="antibodies" value="255 antibodies from 25 providers"/>
</dbReference>
<dbReference type="DNASU" id="23972"/>
<dbReference type="Ensembl" id="ENSMUST00000025833.7">
    <property type="protein sequence ID" value="ENSMUSP00000025833.7"/>
    <property type="gene ID" value="ENSMUSG00000024899.8"/>
</dbReference>
<dbReference type="GeneID" id="23972"/>
<dbReference type="KEGG" id="mmu:23972"/>
<dbReference type="UCSC" id="uc008hfl.2">
    <property type="organism name" value="mouse"/>
</dbReference>
<dbReference type="AGR" id="MGI:1330223"/>
<dbReference type="CTD" id="9060"/>
<dbReference type="MGI" id="MGI:1330223">
    <property type="gene designation" value="Papss2"/>
</dbReference>
<dbReference type="VEuPathDB" id="HostDB:ENSMUSG00000024899"/>
<dbReference type="eggNOG" id="KOG4238">
    <property type="taxonomic scope" value="Eukaryota"/>
</dbReference>
<dbReference type="GeneTree" id="ENSGT00390000009613"/>
<dbReference type="HOGENOM" id="CLU_009463_3_0_1"/>
<dbReference type="InParanoid" id="O88428"/>
<dbReference type="OMA" id="IEIYKHH"/>
<dbReference type="OrthoDB" id="506431at2759"/>
<dbReference type="PhylomeDB" id="O88428"/>
<dbReference type="TreeFam" id="TF313143"/>
<dbReference type="Reactome" id="R-MMU-174362">
    <property type="pathway name" value="Transport and synthesis of PAPS"/>
</dbReference>
<dbReference type="UniPathway" id="UPA00097"/>
<dbReference type="BioGRID-ORCS" id="23972">
    <property type="hits" value="0 hits in 77 CRISPR screens"/>
</dbReference>
<dbReference type="ChiTaRS" id="Papss2">
    <property type="organism name" value="mouse"/>
</dbReference>
<dbReference type="PRO" id="PR:O88428"/>
<dbReference type="Proteomes" id="UP000000589">
    <property type="component" value="Chromosome 19"/>
</dbReference>
<dbReference type="RNAct" id="O88428">
    <property type="molecule type" value="protein"/>
</dbReference>
<dbReference type="Bgee" id="ENSMUSG00000024899">
    <property type="expression patterns" value="Expressed in prostate gland ventral lobe and 318 other cell types or tissues"/>
</dbReference>
<dbReference type="ExpressionAtlas" id="O88428">
    <property type="expression patterns" value="baseline and differential"/>
</dbReference>
<dbReference type="GO" id="GO:0005829">
    <property type="term" value="C:cytosol"/>
    <property type="evidence" value="ECO:0000266"/>
    <property type="project" value="MGI"/>
</dbReference>
<dbReference type="GO" id="GO:0004020">
    <property type="term" value="F:adenylylsulfate kinase activity"/>
    <property type="evidence" value="ECO:0000314"/>
    <property type="project" value="MGI"/>
</dbReference>
<dbReference type="GO" id="GO:0005524">
    <property type="term" value="F:ATP binding"/>
    <property type="evidence" value="ECO:0007669"/>
    <property type="project" value="UniProtKB-KW"/>
</dbReference>
<dbReference type="GO" id="GO:0016779">
    <property type="term" value="F:nucleotidyltransferase activity"/>
    <property type="evidence" value="ECO:0000250"/>
    <property type="project" value="UniProtKB"/>
</dbReference>
<dbReference type="GO" id="GO:0004781">
    <property type="term" value="F:sulfate adenylyltransferase (ATP) activity"/>
    <property type="evidence" value="ECO:0000314"/>
    <property type="project" value="MGI"/>
</dbReference>
<dbReference type="GO" id="GO:0050428">
    <property type="term" value="P:3'-phosphoadenosine 5'-phosphosulfate biosynthetic process"/>
    <property type="evidence" value="ECO:0000314"/>
    <property type="project" value="UniProtKB"/>
</dbReference>
<dbReference type="GO" id="GO:0007596">
    <property type="term" value="P:blood coagulation"/>
    <property type="evidence" value="ECO:0000315"/>
    <property type="project" value="MGI"/>
</dbReference>
<dbReference type="GO" id="GO:0060348">
    <property type="term" value="P:bone development"/>
    <property type="evidence" value="ECO:0000315"/>
    <property type="project" value="MGI"/>
</dbReference>
<dbReference type="GO" id="GO:0000103">
    <property type="term" value="P:sulfate assimilation"/>
    <property type="evidence" value="ECO:0000314"/>
    <property type="project" value="MGI"/>
</dbReference>
<dbReference type="CDD" id="cd02027">
    <property type="entry name" value="APSK"/>
    <property type="match status" value="1"/>
</dbReference>
<dbReference type="CDD" id="cd00517">
    <property type="entry name" value="ATPS"/>
    <property type="match status" value="1"/>
</dbReference>
<dbReference type="FunFam" id="3.40.50.300:FF:000212">
    <property type="entry name" value="Adenylyl-sulfate kinase"/>
    <property type="match status" value="1"/>
</dbReference>
<dbReference type="FunFam" id="3.10.400.10:FF:000001">
    <property type="entry name" value="bifunctional 3'-phosphoadenosine 5'-phosphosulfate synthase 1"/>
    <property type="match status" value="1"/>
</dbReference>
<dbReference type="FunFam" id="3.40.50.620:FF:000006">
    <property type="entry name" value="bifunctional 3'-phosphoadenosine 5'-phosphosulfate synthase 1"/>
    <property type="match status" value="1"/>
</dbReference>
<dbReference type="Gene3D" id="3.40.50.620">
    <property type="entry name" value="HUPs"/>
    <property type="match status" value="1"/>
</dbReference>
<dbReference type="Gene3D" id="3.40.50.300">
    <property type="entry name" value="P-loop containing nucleotide triphosphate hydrolases"/>
    <property type="match status" value="1"/>
</dbReference>
<dbReference type="Gene3D" id="3.10.400.10">
    <property type="entry name" value="Sulfate adenylyltransferase"/>
    <property type="match status" value="1"/>
</dbReference>
<dbReference type="HAMAP" id="MF_00065">
    <property type="entry name" value="Adenylyl_sulf_kinase"/>
    <property type="match status" value="1"/>
</dbReference>
<dbReference type="InterPro" id="IPR002891">
    <property type="entry name" value="APS_kinase"/>
</dbReference>
<dbReference type="InterPro" id="IPR025980">
    <property type="entry name" value="ATP-Sase_PUA-like_dom"/>
</dbReference>
<dbReference type="InterPro" id="IPR027417">
    <property type="entry name" value="P-loop_NTPase"/>
</dbReference>
<dbReference type="InterPro" id="IPR015947">
    <property type="entry name" value="PUA-like_sf"/>
</dbReference>
<dbReference type="InterPro" id="IPR014729">
    <property type="entry name" value="Rossmann-like_a/b/a_fold"/>
</dbReference>
<dbReference type="InterPro" id="IPR024951">
    <property type="entry name" value="Sulfurylase_cat_dom"/>
</dbReference>
<dbReference type="InterPro" id="IPR002650">
    <property type="entry name" value="Sulphate_adenylyltransferase"/>
</dbReference>
<dbReference type="NCBIfam" id="TIGR00455">
    <property type="entry name" value="apsK"/>
    <property type="match status" value="1"/>
</dbReference>
<dbReference type="NCBIfam" id="NF003013">
    <property type="entry name" value="PRK03846.1"/>
    <property type="match status" value="1"/>
</dbReference>
<dbReference type="NCBIfam" id="TIGR00339">
    <property type="entry name" value="sopT"/>
    <property type="match status" value="1"/>
</dbReference>
<dbReference type="PANTHER" id="PTHR11055">
    <property type="entry name" value="BIFUNCTIONAL 3'-PHOSPHOADENOSINE 5'-PHOSPHOSULFATE SYNTHASE"/>
    <property type="match status" value="1"/>
</dbReference>
<dbReference type="PANTHER" id="PTHR11055:SF16">
    <property type="entry name" value="BIFUNCTIONAL 3'-PHOSPHOADENOSINE 5'-PHOSPHOSULFATE SYNTHASE 2"/>
    <property type="match status" value="1"/>
</dbReference>
<dbReference type="Pfam" id="PF01583">
    <property type="entry name" value="APS_kinase"/>
    <property type="match status" value="1"/>
</dbReference>
<dbReference type="Pfam" id="PF01747">
    <property type="entry name" value="ATP-sulfurylase"/>
    <property type="match status" value="1"/>
</dbReference>
<dbReference type="Pfam" id="PF14306">
    <property type="entry name" value="PUA_2"/>
    <property type="match status" value="1"/>
</dbReference>
<dbReference type="SUPFAM" id="SSF52374">
    <property type="entry name" value="Nucleotidylyl transferase"/>
    <property type="match status" value="1"/>
</dbReference>
<dbReference type="SUPFAM" id="SSF52540">
    <property type="entry name" value="P-loop containing nucleoside triphosphate hydrolases"/>
    <property type="match status" value="1"/>
</dbReference>
<dbReference type="SUPFAM" id="SSF88697">
    <property type="entry name" value="PUA domain-like"/>
    <property type="match status" value="1"/>
</dbReference>
<organism>
    <name type="scientific">Mus musculus</name>
    <name type="common">Mouse</name>
    <dbReference type="NCBI Taxonomy" id="10090"/>
    <lineage>
        <taxon>Eukaryota</taxon>
        <taxon>Metazoa</taxon>
        <taxon>Chordata</taxon>
        <taxon>Craniata</taxon>
        <taxon>Vertebrata</taxon>
        <taxon>Euteleostomi</taxon>
        <taxon>Mammalia</taxon>
        <taxon>Eutheria</taxon>
        <taxon>Euarchontoglires</taxon>
        <taxon>Glires</taxon>
        <taxon>Rodentia</taxon>
        <taxon>Myomorpha</taxon>
        <taxon>Muroidea</taxon>
        <taxon>Muridae</taxon>
        <taxon>Murinae</taxon>
        <taxon>Mus</taxon>
        <taxon>Mus</taxon>
    </lineage>
</organism>
<accession>O88428</accession>
<accession>Q5BKP4</accession>
<accession>Q9Z274</accession>
<name>PAPS2_MOUSE</name>
<feature type="chain" id="PRO_0000105962" description="Bifunctional 3'-phosphoadenosine 5'-phosphosulfate synthase 2">
    <location>
        <begin position="1"/>
        <end position="621"/>
    </location>
</feature>
<feature type="region of interest" description="Adenylyl-sulfate kinase" evidence="6">
    <location>
        <begin position="1"/>
        <end position="216"/>
    </location>
</feature>
<feature type="region of interest" description="Sulfate adenylyltransferase" evidence="6">
    <location>
        <begin position="225"/>
        <end position="621"/>
    </location>
</feature>
<feature type="binding site" evidence="1">
    <location>
        <begin position="53"/>
        <end position="58"/>
    </location>
    <ligand>
        <name>ATP</name>
        <dbReference type="ChEBI" id="CHEBI:30616"/>
        <label>1</label>
    </ligand>
</feature>
<feature type="binding site" evidence="1">
    <location>
        <begin position="80"/>
        <end position="83"/>
    </location>
    <ligand>
        <name>adenosine 5'-phosphosulfate</name>
        <dbReference type="ChEBI" id="CHEBI:58243"/>
    </ligand>
</feature>
<feature type="binding site" evidence="1">
    <location>
        <position position="92"/>
    </location>
    <ligand>
        <name>adenosine 5'-phosphosulfate</name>
        <dbReference type="ChEBI" id="CHEBI:58243"/>
    </ligand>
</feature>
<feature type="binding site" evidence="1">
    <location>
        <begin position="97"/>
        <end position="100"/>
    </location>
    <ligand>
        <name>adenosine 5'-phosphosulfate</name>
        <dbReference type="ChEBI" id="CHEBI:58243"/>
    </ligand>
</feature>
<feature type="binding site" evidence="1">
    <location>
        <begin position="123"/>
        <end position="124"/>
    </location>
    <ligand>
        <name>adenosine 5'-phosphosulfate</name>
        <dbReference type="ChEBI" id="CHEBI:58243"/>
    </ligand>
</feature>
<feature type="binding site" evidence="1">
    <location>
        <position position="162"/>
    </location>
    <ligand>
        <name>adenosine 5'-phosphosulfate</name>
        <dbReference type="ChEBI" id="CHEBI:58243"/>
    </ligand>
</feature>
<feature type="binding site" evidence="1">
    <location>
        <begin position="175"/>
        <end position="176"/>
    </location>
    <ligand>
        <name>adenosine 5'-phosphosulfate</name>
        <dbReference type="ChEBI" id="CHEBI:58243"/>
    </ligand>
</feature>
<feature type="binding site" evidence="2">
    <location>
        <position position="198"/>
    </location>
    <ligand>
        <name>ATP</name>
        <dbReference type="ChEBI" id="CHEBI:30616"/>
        <label>1</label>
    </ligand>
</feature>
<feature type="binding site" evidence="1">
    <location>
        <begin position="415"/>
        <end position="418"/>
    </location>
    <ligand>
        <name>ATP</name>
        <dbReference type="ChEBI" id="CHEBI:30616"/>
        <label>2</label>
    </ligand>
</feature>
<feature type="binding site" evidence="1">
    <location>
        <begin position="517"/>
        <end position="521"/>
    </location>
    <ligand>
        <name>ATP</name>
        <dbReference type="ChEBI" id="CHEBI:30616"/>
        <label>2</label>
    </ligand>
</feature>
<feature type="binding site" evidence="1">
    <location>
        <position position="559"/>
    </location>
    <ligand>
        <name>ATP</name>
        <dbReference type="ChEBI" id="CHEBI:30616"/>
        <label>2</label>
    </ligand>
</feature>
<feature type="sequence variant" description="In bm; activity abolished." evidence="4 5">
    <original>G</original>
    <variation>R</variation>
    <location>
        <position position="79"/>
    </location>
</feature>
<feature type="sequence variant" evidence="5">
    <original>R</original>
    <variation>K</variation>
    <location>
        <position position="109"/>
    </location>
</feature>
<feature type="sequence conflict" description="In Ref. 1; AAC40191." evidence="6" ref="1">
    <original>F</original>
    <variation>S</variation>
    <location>
        <position position="5"/>
    </location>
</feature>
<feature type="sequence conflict" description="In Ref. 2; AAC98687." evidence="6" ref="2">
    <location>
        <begin position="290"/>
        <end position="294"/>
    </location>
</feature>
<gene>
    <name type="primary">Papss2</name>
    <name type="synonym">Atpsk2</name>
</gene>